<name>DUSTY_APIME</name>
<sequence length="969" mass="110428">MVSKLPQEFRRYLRNRNQLQHVLEETQQALELINLENFFPEENVVEELLSPLTLNRITHILANSPAIIILGQDSKAKAIVVNTLISNDILPVCNGLWRWIRLTYGQTNHISLTLDLEYELVENLQANEKPWSTLPIEDLTKSDNEDITYPTVLEVQLNLPILKDGVQIFIAPNNGAVKVLANEFLSILPIFLYALGEQPLTEQNLEELRDLKETYPFNPVLFISSLENISLNGIDPELTESEQHRLQNRLYTNDSTSSKTDDDSIDFDRMNSLGLSWLDQLTNLGFLGMKESVEVDQLSWLGSGQYISDFVGSCRKTDQILYFIRGCLQTYLINASTYLNEVHTASLRKFILSAFDMARIIQITPKRIQYAQHKENELYANLMKIVHEKQQEITGLIQNIIQEMKNDVLLSNNDVYLYQNTMSNNNQRTEWSATVKAAISEVQRVVLGRLCEKVAKQLVNSVNCLRESFIGTLQRCLLSLEKTYERDTCLLASDALKQILSAAYNVELHNSSPFSIYSFLERLNLIFMSSSLQWSSTHTLDVAWRRKVTIEILNSLSATKLSKIILMQFGDKLESSHDSFQAALRSIENYYSGKLERTEEQRIALRKYHAPRLAKLALESTSMIDVVRYGKPHCAEEIGRGQYGIVFACDGWGGKAGPCAIKSVVPSDESHWNDLAMEFYYNRSIPDHKRIVKLRGSIIDHSYGGGFGFGSAVLLISDRLSRDLYCGIRAGLSWLERIQIALDVLEGIRYLHSQGLVHRDVKLKNVLLDIENRAKLTDFGFCITEVMMLGSIVGTPVHMAPELLSGHYDSSVDVYAFGILFWYLCAGHVRLPYTFEQFHNKELLWTSVKKALMIVGIRPERLPSFDDECWRLMEQCWSGEPSKRPLLGAIVPVLESIQQKAKRSKSLQEVSSDKLQESSTDSRNPALALAEPYNQRGTVVSPPPTKRRTMKVVKYHLFLTNLYIQMREL</sequence>
<gene>
    <name evidence="3" type="primary">DSTYK</name>
    <name evidence="3" type="synonym">RIPK5</name>
</gene>
<accession>Q1L6Q1</accession>
<accession>Q1L6Q0</accession>
<keyword id="KW-0025">Alternative splicing</keyword>
<keyword id="KW-0067">ATP-binding</keyword>
<keyword id="KW-0175">Coiled coil</keyword>
<keyword id="KW-0963">Cytoplasm</keyword>
<keyword id="KW-0418">Kinase</keyword>
<keyword id="KW-0547">Nucleotide-binding</keyword>
<keyword id="KW-1185">Reference proteome</keyword>
<keyword id="KW-0723">Serine/threonine-protein kinase</keyword>
<keyword id="KW-0808">Transferase</keyword>
<keyword id="KW-0829">Tyrosine-protein kinase</keyword>
<protein>
    <recommendedName>
        <fullName evidence="9">Dual serine/threonine and tyrosine protein kinase</fullName>
        <ecNumber evidence="2">2.7.12.1</ecNumber>
    </recommendedName>
    <alternativeName>
        <fullName evidence="9 11">Dusty protein kinase</fullName>
        <shortName evidence="9">Dusty PK</shortName>
    </alternativeName>
    <alternativeName>
        <fullName evidence="3">Receptor-interacting serine/threonine-protein kinase 5</fullName>
    </alternativeName>
</protein>
<organism>
    <name type="scientific">Apis mellifera</name>
    <name type="common">Honeybee</name>
    <dbReference type="NCBI Taxonomy" id="7460"/>
    <lineage>
        <taxon>Eukaryota</taxon>
        <taxon>Metazoa</taxon>
        <taxon>Ecdysozoa</taxon>
        <taxon>Arthropoda</taxon>
        <taxon>Hexapoda</taxon>
        <taxon>Insecta</taxon>
        <taxon>Pterygota</taxon>
        <taxon>Neoptera</taxon>
        <taxon>Endopterygota</taxon>
        <taxon>Hymenoptera</taxon>
        <taxon>Apocrita</taxon>
        <taxon>Aculeata</taxon>
        <taxon>Apoidea</taxon>
        <taxon>Anthophila</taxon>
        <taxon>Apidae</taxon>
        <taxon>Apis</taxon>
    </lineage>
</organism>
<proteinExistence type="evidence at transcript level"/>
<reference evidence="10 11" key="1">
    <citation type="journal article" date="2006" name="Biochim. Biophys. Acta">
        <title>Dusty protein kinases: primary structure, gene evolution, tissue specific expression and unique features of the catalytic domain.</title>
        <authorList>
            <person name="Peng J."/>
            <person name="Dong W."/>
            <person name="Chen Y."/>
            <person name="Mo R."/>
            <person name="Cheng J.-F."/>
            <person name="Hui C.-C."/>
            <person name="Mohandas N."/>
            <person name="Huang C.-H."/>
        </authorList>
    </citation>
    <scope>NUCLEOTIDE SEQUENCE [MRNA] (ISOFORMS 1 AND 2)</scope>
</reference>
<feature type="chain" id="PRO_0000374060" description="Dual serine/threonine and tyrosine protein kinase">
    <location>
        <begin position="1"/>
        <end position="969"/>
    </location>
</feature>
<feature type="domain" description="Protein kinase" evidence="5">
    <location>
        <begin position="632"/>
        <end position="894"/>
    </location>
</feature>
<feature type="region of interest" description="Disordered" evidence="7">
    <location>
        <begin position="904"/>
        <end position="945"/>
    </location>
</feature>
<feature type="coiled-coil region" evidence="4">
    <location>
        <begin position="7"/>
        <end position="37"/>
    </location>
</feature>
<feature type="active site" description="Proton acceptor" evidence="3 5 6">
    <location>
        <position position="760"/>
    </location>
</feature>
<feature type="binding site" evidence="3 5">
    <location>
        <begin position="638"/>
        <end position="646"/>
    </location>
    <ligand>
        <name>ATP</name>
        <dbReference type="ChEBI" id="CHEBI:30616"/>
    </ligand>
</feature>
<feature type="binding site" evidence="3 5">
    <location>
        <position position="662"/>
    </location>
    <ligand>
        <name>ATP</name>
        <dbReference type="ChEBI" id="CHEBI:30616"/>
    </ligand>
</feature>
<feature type="splice variant" id="VSP_053089" description="In isoform 2." evidence="9">
    <location>
        <begin position="1"/>
        <end position="38"/>
    </location>
</feature>
<feature type="splice variant" id="VSP_053090" description="In isoform 2." evidence="9">
    <original>FPE</original>
    <variation>MFT</variation>
    <location>
        <begin position="39"/>
        <end position="41"/>
    </location>
</feature>
<comment type="catalytic activity">
    <reaction evidence="2">
        <text>L-seryl-[protein] + ATP = O-phospho-L-seryl-[protein] + ADP + H(+)</text>
        <dbReference type="Rhea" id="RHEA:17989"/>
        <dbReference type="Rhea" id="RHEA-COMP:9863"/>
        <dbReference type="Rhea" id="RHEA-COMP:11604"/>
        <dbReference type="ChEBI" id="CHEBI:15378"/>
        <dbReference type="ChEBI" id="CHEBI:29999"/>
        <dbReference type="ChEBI" id="CHEBI:30616"/>
        <dbReference type="ChEBI" id="CHEBI:83421"/>
        <dbReference type="ChEBI" id="CHEBI:456216"/>
        <dbReference type="EC" id="2.7.12.1"/>
    </reaction>
</comment>
<comment type="catalytic activity">
    <reaction evidence="2">
        <text>L-threonyl-[protein] + ATP = O-phospho-L-threonyl-[protein] + ADP + H(+)</text>
        <dbReference type="Rhea" id="RHEA:46608"/>
        <dbReference type="Rhea" id="RHEA-COMP:11060"/>
        <dbReference type="Rhea" id="RHEA-COMP:11605"/>
        <dbReference type="ChEBI" id="CHEBI:15378"/>
        <dbReference type="ChEBI" id="CHEBI:30013"/>
        <dbReference type="ChEBI" id="CHEBI:30616"/>
        <dbReference type="ChEBI" id="CHEBI:61977"/>
        <dbReference type="ChEBI" id="CHEBI:456216"/>
        <dbReference type="EC" id="2.7.12.1"/>
    </reaction>
</comment>
<comment type="catalytic activity">
    <reaction evidence="2">
        <text>L-tyrosyl-[protein] + ATP = O-phospho-L-tyrosyl-[protein] + ADP + H(+)</text>
        <dbReference type="Rhea" id="RHEA:10596"/>
        <dbReference type="Rhea" id="RHEA-COMP:10136"/>
        <dbReference type="Rhea" id="RHEA-COMP:20101"/>
        <dbReference type="ChEBI" id="CHEBI:15378"/>
        <dbReference type="ChEBI" id="CHEBI:30616"/>
        <dbReference type="ChEBI" id="CHEBI:46858"/>
        <dbReference type="ChEBI" id="CHEBI:61978"/>
        <dbReference type="ChEBI" id="CHEBI:456216"/>
        <dbReference type="EC" id="2.7.12.1"/>
    </reaction>
</comment>
<comment type="subcellular location">
    <subcellularLocation>
        <location evidence="1">Cytoplasm</location>
    </subcellularLocation>
</comment>
<comment type="alternative products">
    <event type="alternative splicing"/>
    <isoform>
        <id>Q1L6Q1-1</id>
        <name evidence="8">1</name>
        <sequence type="displayed"/>
    </isoform>
    <isoform>
        <id>Q1L6Q1-2</id>
        <name evidence="8">2</name>
        <sequence type="described" ref="VSP_053089 VSP_053090"/>
    </isoform>
</comment>
<comment type="similarity">
    <text evidence="5">Belongs to the protein kinase superfamily. Ser/Thr protein kinase family.</text>
</comment>
<evidence type="ECO:0000250" key="1"/>
<evidence type="ECO:0000250" key="2">
    <source>
        <dbReference type="UniProtKB" id="P16879"/>
    </source>
</evidence>
<evidence type="ECO:0000250" key="3">
    <source>
        <dbReference type="UniProtKB" id="Q6XUX3"/>
    </source>
</evidence>
<evidence type="ECO:0000255" key="4"/>
<evidence type="ECO:0000255" key="5">
    <source>
        <dbReference type="PROSITE-ProRule" id="PRU00159"/>
    </source>
</evidence>
<evidence type="ECO:0000255" key="6">
    <source>
        <dbReference type="PROSITE-ProRule" id="PRU10027"/>
    </source>
</evidence>
<evidence type="ECO:0000256" key="7">
    <source>
        <dbReference type="SAM" id="MobiDB-lite"/>
    </source>
</evidence>
<evidence type="ECO:0000269" key="8">
    <source>
    </source>
</evidence>
<evidence type="ECO:0000303" key="9">
    <source>
    </source>
</evidence>
<evidence type="ECO:0000305" key="10"/>
<evidence type="ECO:0000312" key="11">
    <source>
        <dbReference type="EMBL" id="AAY81955.1"/>
    </source>
</evidence>
<dbReference type="EC" id="2.7.12.1" evidence="2"/>
<dbReference type="EMBL" id="DQ013067">
    <property type="protein sequence ID" value="AAY81955.1"/>
    <property type="molecule type" value="mRNA"/>
</dbReference>
<dbReference type="EMBL" id="DQ013068">
    <property type="protein sequence ID" value="AAY81956.1"/>
    <property type="molecule type" value="mRNA"/>
</dbReference>
<dbReference type="RefSeq" id="NP_001071281.1">
    <molecule id="Q1L6Q1-1"/>
    <property type="nucleotide sequence ID" value="NM_001077813.1"/>
</dbReference>
<dbReference type="SMR" id="Q1L6Q1"/>
<dbReference type="STRING" id="7460.Q1L6Q1"/>
<dbReference type="PaxDb" id="7460-GB40067-PA"/>
<dbReference type="EnsemblMetazoa" id="NM_001077813">
    <molecule id="Q1L6Q1-1"/>
    <property type="protein sequence ID" value="NP_001071281"/>
    <property type="gene ID" value="GeneID_412747"/>
</dbReference>
<dbReference type="GeneID" id="412747"/>
<dbReference type="KEGG" id="ame:412747"/>
<dbReference type="CTD" id="100115320"/>
<dbReference type="eggNOG" id="KOG0192">
    <property type="taxonomic scope" value="Eukaryota"/>
</dbReference>
<dbReference type="InParanoid" id="Q1L6Q1"/>
<dbReference type="OrthoDB" id="122279at2759"/>
<dbReference type="PhylomeDB" id="Q1L6Q1"/>
<dbReference type="Proteomes" id="UP000005203">
    <property type="component" value="Linkage group LG13"/>
</dbReference>
<dbReference type="GO" id="GO:0016324">
    <property type="term" value="C:apical plasma membrane"/>
    <property type="evidence" value="ECO:0000250"/>
    <property type="project" value="UniProtKB"/>
</dbReference>
<dbReference type="GO" id="GO:0016323">
    <property type="term" value="C:basolateral plasma membrane"/>
    <property type="evidence" value="ECO:0000250"/>
    <property type="project" value="UniProtKB"/>
</dbReference>
<dbReference type="GO" id="GO:0005737">
    <property type="term" value="C:cytoplasm"/>
    <property type="evidence" value="ECO:0000250"/>
    <property type="project" value="UniProtKB"/>
</dbReference>
<dbReference type="GO" id="GO:0005524">
    <property type="term" value="F:ATP binding"/>
    <property type="evidence" value="ECO:0007669"/>
    <property type="project" value="UniProtKB-KW"/>
</dbReference>
<dbReference type="GO" id="GO:0106310">
    <property type="term" value="F:protein serine kinase activity"/>
    <property type="evidence" value="ECO:0007669"/>
    <property type="project" value="RHEA"/>
</dbReference>
<dbReference type="GO" id="GO:0004674">
    <property type="term" value="F:protein serine/threonine kinase activity"/>
    <property type="evidence" value="ECO:0007669"/>
    <property type="project" value="UniProtKB-KW"/>
</dbReference>
<dbReference type="GO" id="GO:0004712">
    <property type="term" value="F:protein serine/threonine/tyrosine kinase activity"/>
    <property type="evidence" value="ECO:0007669"/>
    <property type="project" value="UniProtKB-EC"/>
</dbReference>
<dbReference type="GO" id="GO:0004713">
    <property type="term" value="F:protein tyrosine kinase activity"/>
    <property type="evidence" value="ECO:0007669"/>
    <property type="project" value="UniProtKB-KW"/>
</dbReference>
<dbReference type="GO" id="GO:0044344">
    <property type="term" value="P:cellular response to fibroblast growth factor stimulus"/>
    <property type="evidence" value="ECO:0007669"/>
    <property type="project" value="TreeGrafter"/>
</dbReference>
<dbReference type="GO" id="GO:0043066">
    <property type="term" value="P:negative regulation of apoptotic process"/>
    <property type="evidence" value="ECO:0007669"/>
    <property type="project" value="TreeGrafter"/>
</dbReference>
<dbReference type="GO" id="GO:0070374">
    <property type="term" value="P:positive regulation of ERK1 and ERK2 cascade"/>
    <property type="evidence" value="ECO:0007669"/>
    <property type="project" value="TreeGrafter"/>
</dbReference>
<dbReference type="GO" id="GO:0045743">
    <property type="term" value="P:positive regulation of fibroblast growth factor receptor signaling pathway"/>
    <property type="evidence" value="ECO:0007669"/>
    <property type="project" value="TreeGrafter"/>
</dbReference>
<dbReference type="CDD" id="cd13975">
    <property type="entry name" value="PKc_Dusty"/>
    <property type="match status" value="1"/>
</dbReference>
<dbReference type="Gene3D" id="1.10.510.10">
    <property type="entry name" value="Transferase(Phosphotransferase) domain 1"/>
    <property type="match status" value="1"/>
</dbReference>
<dbReference type="InterPro" id="IPR051302">
    <property type="entry name" value="Dual_SerThr-Tyr_Kinase"/>
</dbReference>
<dbReference type="InterPro" id="IPR011009">
    <property type="entry name" value="Kinase-like_dom_sf"/>
</dbReference>
<dbReference type="InterPro" id="IPR000719">
    <property type="entry name" value="Prot_kinase_dom"/>
</dbReference>
<dbReference type="InterPro" id="IPR017441">
    <property type="entry name" value="Protein_kinase_ATP_BS"/>
</dbReference>
<dbReference type="InterPro" id="IPR008271">
    <property type="entry name" value="Ser/Thr_kinase_AS"/>
</dbReference>
<dbReference type="PANTHER" id="PTHR46392">
    <property type="entry name" value="DUAL SERINE/THREONINE AND TYROSINE PROTEIN KINASE"/>
    <property type="match status" value="1"/>
</dbReference>
<dbReference type="PANTHER" id="PTHR46392:SF1">
    <property type="entry name" value="DUAL SERINE_THREONINE AND TYROSINE PROTEIN KINASE"/>
    <property type="match status" value="1"/>
</dbReference>
<dbReference type="Pfam" id="PF00069">
    <property type="entry name" value="Pkinase"/>
    <property type="match status" value="1"/>
</dbReference>
<dbReference type="SMART" id="SM00220">
    <property type="entry name" value="S_TKc"/>
    <property type="match status" value="1"/>
</dbReference>
<dbReference type="SUPFAM" id="SSF56112">
    <property type="entry name" value="Protein kinase-like (PK-like)"/>
    <property type="match status" value="1"/>
</dbReference>
<dbReference type="PROSITE" id="PS00107">
    <property type="entry name" value="PROTEIN_KINASE_ATP"/>
    <property type="match status" value="1"/>
</dbReference>
<dbReference type="PROSITE" id="PS50011">
    <property type="entry name" value="PROTEIN_KINASE_DOM"/>
    <property type="match status" value="1"/>
</dbReference>
<dbReference type="PROSITE" id="PS00108">
    <property type="entry name" value="PROTEIN_KINASE_ST"/>
    <property type="match status" value="1"/>
</dbReference>